<comment type="catalytic activity">
    <reaction>
        <text>L-seryl-[protein] + ATP = O-phospho-L-seryl-[protein] + ADP + H(+)</text>
        <dbReference type="Rhea" id="RHEA:17989"/>
        <dbReference type="Rhea" id="RHEA-COMP:9863"/>
        <dbReference type="Rhea" id="RHEA-COMP:11604"/>
        <dbReference type="ChEBI" id="CHEBI:15378"/>
        <dbReference type="ChEBI" id="CHEBI:29999"/>
        <dbReference type="ChEBI" id="CHEBI:30616"/>
        <dbReference type="ChEBI" id="CHEBI:83421"/>
        <dbReference type="ChEBI" id="CHEBI:456216"/>
        <dbReference type="EC" id="2.7.11.1"/>
    </reaction>
</comment>
<comment type="catalytic activity">
    <reaction>
        <text>L-threonyl-[protein] + ATP = O-phospho-L-threonyl-[protein] + ADP + H(+)</text>
        <dbReference type="Rhea" id="RHEA:46608"/>
        <dbReference type="Rhea" id="RHEA-COMP:11060"/>
        <dbReference type="Rhea" id="RHEA-COMP:11605"/>
        <dbReference type="ChEBI" id="CHEBI:15378"/>
        <dbReference type="ChEBI" id="CHEBI:30013"/>
        <dbReference type="ChEBI" id="CHEBI:30616"/>
        <dbReference type="ChEBI" id="CHEBI:61977"/>
        <dbReference type="ChEBI" id="CHEBI:456216"/>
        <dbReference type="EC" id="2.7.11.1"/>
    </reaction>
</comment>
<comment type="similarity">
    <text evidence="1">Belongs to the protein kinase superfamily. Ser/Thr protein kinase family.</text>
</comment>
<accession>Q97IC2</accession>
<sequence>MIGTVLSNRYKIEEEIGVGGTAVVYKAMDTLLNRHVAVKVLKHEFTEDEEFVFKFKREASAAARIANANIVNIYDVGADGNVNYIVMEYVAGKTLKKLIKENGKIEFNKIIDYATQIAKALNFAHKNGIVHRDIKPHNIMVTDDDIIKVTDFGIAKASNESTITTTNKVVGSAHYLSPEQAQGIPVDCRTDIYSFGIVLYEMATGKVPYDADTPVSIALKHIQDAAVPPNELNKDIPIALNKMILRCIEKKPENRYQNANEILDELSNVKNNYVNDDEEFTRVMDPAQIQNESNPNNKLDNDDTYYNGEPYNKEQPQEEPQEENEEPKNKIKGNNMLSGKAKKALVASIIVVLILAGSALAFSMGSGIFKPNSNSVSKVKVPKIIGLSESDAKGKVEDAKLKFQVVDRVKSSKPKGTVVTCYPNEDTEVDSGTVVRVDISSGDTDQTLPSLVGLPESAARAQIKQYGCNVGSVTQEYSDDVAQGNVISQSPSEGSQIKKGMTIDLVISRGPEVKKATVPSVYGKTSDSASSILQNAGFGVNVQNKDVTNADQNGIVIEEYPNGYVNKGTTVTIVIGRFNSTAVQPPNNNNGNGNQNQNQNKTPDTNHDDSKAPTGGNNDNQNQNNTTNPNGTQPAGGNVTGTGNGNVTNTPNGTGQK</sequence>
<dbReference type="EC" id="2.7.11.1"/>
<dbReference type="EMBL" id="AE001437">
    <property type="protein sequence ID" value="AAK79694.1"/>
    <property type="molecule type" value="Genomic_DNA"/>
</dbReference>
<dbReference type="PIR" id="C97113">
    <property type="entry name" value="C97113"/>
</dbReference>
<dbReference type="RefSeq" id="NP_348354.1">
    <property type="nucleotide sequence ID" value="NC_003030.1"/>
</dbReference>
<dbReference type="SMR" id="Q97IC2"/>
<dbReference type="STRING" id="272562.CA_C1728"/>
<dbReference type="KEGG" id="cac:CA_C1728"/>
<dbReference type="PATRIC" id="fig|272562.8.peg.1930"/>
<dbReference type="eggNOG" id="COG0515">
    <property type="taxonomic scope" value="Bacteria"/>
</dbReference>
<dbReference type="eggNOG" id="COG2815">
    <property type="taxonomic scope" value="Bacteria"/>
</dbReference>
<dbReference type="HOGENOM" id="CLU_000288_135_2_9"/>
<dbReference type="OrthoDB" id="9788659at2"/>
<dbReference type="Proteomes" id="UP000000814">
    <property type="component" value="Chromosome"/>
</dbReference>
<dbReference type="GO" id="GO:0005524">
    <property type="term" value="F:ATP binding"/>
    <property type="evidence" value="ECO:0007669"/>
    <property type="project" value="UniProtKB-KW"/>
</dbReference>
<dbReference type="GO" id="GO:0106310">
    <property type="term" value="F:protein serine kinase activity"/>
    <property type="evidence" value="ECO:0007669"/>
    <property type="project" value="RHEA"/>
</dbReference>
<dbReference type="GO" id="GO:0004674">
    <property type="term" value="F:protein serine/threonine kinase activity"/>
    <property type="evidence" value="ECO:0007669"/>
    <property type="project" value="UniProtKB-KW"/>
</dbReference>
<dbReference type="CDD" id="cd06577">
    <property type="entry name" value="PASTA_pknB"/>
    <property type="match status" value="3"/>
</dbReference>
<dbReference type="CDD" id="cd14014">
    <property type="entry name" value="STKc_PknB_like"/>
    <property type="match status" value="1"/>
</dbReference>
<dbReference type="FunFam" id="1.10.510.10:FF:000021">
    <property type="entry name" value="Serine/threonine protein kinase"/>
    <property type="match status" value="1"/>
</dbReference>
<dbReference type="FunFam" id="3.30.200.20:FF:000035">
    <property type="entry name" value="Serine/threonine protein kinase Stk1"/>
    <property type="match status" value="1"/>
</dbReference>
<dbReference type="Gene3D" id="3.30.10.20">
    <property type="match status" value="3"/>
</dbReference>
<dbReference type="Gene3D" id="3.30.200.20">
    <property type="entry name" value="Phosphorylase Kinase, domain 1"/>
    <property type="match status" value="1"/>
</dbReference>
<dbReference type="Gene3D" id="1.10.510.10">
    <property type="entry name" value="Transferase(Phosphotransferase) domain 1"/>
    <property type="match status" value="1"/>
</dbReference>
<dbReference type="InterPro" id="IPR011009">
    <property type="entry name" value="Kinase-like_dom_sf"/>
</dbReference>
<dbReference type="InterPro" id="IPR005543">
    <property type="entry name" value="PASTA_dom"/>
</dbReference>
<dbReference type="InterPro" id="IPR000719">
    <property type="entry name" value="Prot_kinase_dom"/>
</dbReference>
<dbReference type="InterPro" id="IPR017441">
    <property type="entry name" value="Protein_kinase_ATP_BS"/>
</dbReference>
<dbReference type="InterPro" id="IPR008271">
    <property type="entry name" value="Ser/Thr_kinase_AS"/>
</dbReference>
<dbReference type="NCBIfam" id="NF033483">
    <property type="entry name" value="PknB_PASTA_kin"/>
    <property type="match status" value="1"/>
</dbReference>
<dbReference type="PANTHER" id="PTHR43289">
    <property type="entry name" value="MITOGEN-ACTIVATED PROTEIN KINASE KINASE KINASE 20-RELATED"/>
    <property type="match status" value="1"/>
</dbReference>
<dbReference type="PANTHER" id="PTHR43289:SF34">
    <property type="entry name" value="SERINE_THREONINE-PROTEIN KINASE YBDM-RELATED"/>
    <property type="match status" value="1"/>
</dbReference>
<dbReference type="Pfam" id="PF03793">
    <property type="entry name" value="PASTA"/>
    <property type="match status" value="3"/>
</dbReference>
<dbReference type="Pfam" id="PF00069">
    <property type="entry name" value="Pkinase"/>
    <property type="match status" value="1"/>
</dbReference>
<dbReference type="SMART" id="SM00740">
    <property type="entry name" value="PASTA"/>
    <property type="match status" value="3"/>
</dbReference>
<dbReference type="SMART" id="SM00220">
    <property type="entry name" value="S_TKc"/>
    <property type="match status" value="1"/>
</dbReference>
<dbReference type="SUPFAM" id="SSF56112">
    <property type="entry name" value="Protein kinase-like (PK-like)"/>
    <property type="match status" value="1"/>
</dbReference>
<dbReference type="PROSITE" id="PS51178">
    <property type="entry name" value="PASTA"/>
    <property type="match status" value="3"/>
</dbReference>
<dbReference type="PROSITE" id="PS00107">
    <property type="entry name" value="PROTEIN_KINASE_ATP"/>
    <property type="match status" value="1"/>
</dbReference>
<dbReference type="PROSITE" id="PS50011">
    <property type="entry name" value="PROTEIN_KINASE_DOM"/>
    <property type="match status" value="1"/>
</dbReference>
<dbReference type="PROSITE" id="PS00108">
    <property type="entry name" value="PROTEIN_KINASE_ST"/>
    <property type="match status" value="1"/>
</dbReference>
<keyword id="KW-0067">ATP-binding</keyword>
<keyword id="KW-0418">Kinase</keyword>
<keyword id="KW-0547">Nucleotide-binding</keyword>
<keyword id="KW-1185">Reference proteome</keyword>
<keyword id="KW-0677">Repeat</keyword>
<keyword id="KW-0723">Serine/threonine-protein kinase</keyword>
<keyword id="KW-0808">Transferase</keyword>
<organism>
    <name type="scientific">Clostridium acetobutylicum (strain ATCC 824 / DSM 792 / JCM 1419 / IAM 19013 / LMG 5710 / NBRC 13948 / NRRL B-527 / VKM B-1787 / 2291 / W)</name>
    <dbReference type="NCBI Taxonomy" id="272562"/>
    <lineage>
        <taxon>Bacteria</taxon>
        <taxon>Bacillati</taxon>
        <taxon>Bacillota</taxon>
        <taxon>Clostridia</taxon>
        <taxon>Eubacteriales</taxon>
        <taxon>Clostridiaceae</taxon>
        <taxon>Clostridium</taxon>
    </lineage>
</organism>
<protein>
    <recommendedName>
        <fullName>Probable serine/threonine-protein kinase CA_C1728</fullName>
        <ecNumber>2.7.11.1</ecNumber>
    </recommendedName>
</protein>
<reference key="1">
    <citation type="journal article" date="2001" name="J. Bacteriol.">
        <title>Genome sequence and comparative analysis of the solvent-producing bacterium Clostridium acetobutylicum.</title>
        <authorList>
            <person name="Noelling J."/>
            <person name="Breton G."/>
            <person name="Omelchenko M.V."/>
            <person name="Makarova K.S."/>
            <person name="Zeng Q."/>
            <person name="Gibson R."/>
            <person name="Lee H.M."/>
            <person name="Dubois J."/>
            <person name="Qiu D."/>
            <person name="Hitti J."/>
            <person name="Wolf Y.I."/>
            <person name="Tatusov R.L."/>
            <person name="Sabathe F."/>
            <person name="Doucette-Stamm L.A."/>
            <person name="Soucaille P."/>
            <person name="Daly M.J."/>
            <person name="Bennett G.N."/>
            <person name="Koonin E.V."/>
            <person name="Smith D.R."/>
        </authorList>
    </citation>
    <scope>NUCLEOTIDE SEQUENCE [LARGE SCALE GENOMIC DNA]</scope>
    <source>
        <strain>ATCC 824 / DSM 792 / JCM 1419 / IAM 19013 / LMG 5710 / NBRC 13948 / NRRL B-527 / VKM B-1787 / 2291 / W</strain>
    </source>
</reference>
<gene>
    <name type="ordered locus">CA_C1728</name>
</gene>
<proteinExistence type="inferred from homology"/>
<name>PKN2_CLOAB</name>
<evidence type="ECO:0000255" key="1">
    <source>
        <dbReference type="PROSITE-ProRule" id="PRU00159"/>
    </source>
</evidence>
<evidence type="ECO:0000255" key="2">
    <source>
        <dbReference type="PROSITE-ProRule" id="PRU00528"/>
    </source>
</evidence>
<evidence type="ECO:0000255" key="3">
    <source>
        <dbReference type="PROSITE-ProRule" id="PRU10027"/>
    </source>
</evidence>
<evidence type="ECO:0000256" key="4">
    <source>
        <dbReference type="SAM" id="MobiDB-lite"/>
    </source>
</evidence>
<feature type="chain" id="PRO_0000171194" description="Probable serine/threonine-protein kinase CA_C1728">
    <location>
        <begin position="1"/>
        <end position="657"/>
    </location>
</feature>
<feature type="domain" description="Protein kinase" evidence="1">
    <location>
        <begin position="10"/>
        <end position="274"/>
    </location>
</feature>
<feature type="domain" description="PASTA 1" evidence="2">
    <location>
        <begin position="375"/>
        <end position="441"/>
    </location>
</feature>
<feature type="domain" description="PASTA 2" evidence="2">
    <location>
        <begin position="443"/>
        <end position="509"/>
    </location>
</feature>
<feature type="domain" description="PASTA 3" evidence="2">
    <location>
        <begin position="512"/>
        <end position="577"/>
    </location>
</feature>
<feature type="region of interest" description="Disordered" evidence="4">
    <location>
        <begin position="286"/>
        <end position="334"/>
    </location>
</feature>
<feature type="region of interest" description="Disordered" evidence="4">
    <location>
        <begin position="581"/>
        <end position="657"/>
    </location>
</feature>
<feature type="compositionally biased region" description="Polar residues" evidence="4">
    <location>
        <begin position="288"/>
        <end position="298"/>
    </location>
</feature>
<feature type="compositionally biased region" description="Low complexity" evidence="4">
    <location>
        <begin position="584"/>
        <end position="600"/>
    </location>
</feature>
<feature type="compositionally biased region" description="Low complexity" evidence="4">
    <location>
        <begin position="613"/>
        <end position="637"/>
    </location>
</feature>
<feature type="compositionally biased region" description="Low complexity" evidence="4">
    <location>
        <begin position="645"/>
        <end position="657"/>
    </location>
</feature>
<feature type="active site" description="Proton acceptor" evidence="1 3">
    <location>
        <position position="143"/>
    </location>
</feature>
<feature type="binding site" evidence="1">
    <location>
        <begin position="16"/>
        <end position="24"/>
    </location>
    <ligand>
        <name>ATP</name>
        <dbReference type="ChEBI" id="CHEBI:30616"/>
    </ligand>
</feature>
<feature type="binding site" evidence="1">
    <location>
        <position position="39"/>
    </location>
    <ligand>
        <name>ATP</name>
        <dbReference type="ChEBI" id="CHEBI:30616"/>
    </ligand>
</feature>